<proteinExistence type="evidence at transcript level"/>
<evidence type="ECO:0000250" key="1">
    <source>
        <dbReference type="UniProtKB" id="Q76EJ3"/>
    </source>
</evidence>
<evidence type="ECO:0000255" key="2"/>
<evidence type="ECO:0000256" key="3">
    <source>
        <dbReference type="SAM" id="MobiDB-lite"/>
    </source>
</evidence>
<evidence type="ECO:0000305" key="4"/>
<name>S35D2_BOVIN</name>
<sequence>MAEVHRRQHARVKGEAPAKSSTHRHEEELGMASAETLTVFLKLLAAGFYGVSSFLIVVVNKSVLTNYRFPSSLCVGLGQMVATVAVLWVGKALRVVKFPDFDRNVPRKTFPLPLLYFGNQITGLFSTKKLNLPMFTVLRRFSILFTMFAEGVLLKKTFSWGIKMTVFAMIIGAFVAASSDLAFDLEGYVFILINDVLTAANGAYVKQKLDSKELGKYGLLYYNALFMILPTLAIAYFTGDAQKALDFEGWADTLFLLQFTLSCVMGFILMYATVLCTQYNSALTTTIVGCIKNILITYIGMVFGGDYIFTWTNFIGLNISIAGSLVYSYITFSEEQLSKQSEASSKLDIKGKGAV</sequence>
<protein>
    <recommendedName>
        <fullName evidence="1">Nucleotide sugar transporter SLC35D2</fullName>
    </recommendedName>
    <alternativeName>
        <fullName>Solute carrier family 35 member D2</fullName>
    </alternativeName>
</protein>
<comment type="function">
    <text evidence="1">Nucleotide sugar antiporter transporting UDP-N-acetylglucosamine (UDP-GlcNAc) and UDP-glucose (UDP-Glc) from the cytosol into the lumen of the Golgi in exchange of UMP. By supplying UDP-N-acetylglucosamine, a donor substrate to heparan sulfate synthases, probably takes part in the synthesis of these glycoconjugates.</text>
</comment>
<comment type="catalytic activity">
    <reaction evidence="1">
        <text>UMP(out) + UDP-N-acetyl-alpha-D-glucosamine(in) = UMP(in) + UDP-N-acetyl-alpha-D-glucosamine(out)</text>
        <dbReference type="Rhea" id="RHEA:72695"/>
        <dbReference type="ChEBI" id="CHEBI:57705"/>
        <dbReference type="ChEBI" id="CHEBI:57865"/>
    </reaction>
</comment>
<comment type="catalytic activity">
    <reaction evidence="1">
        <text>UMP(out) + UDP-alpha-D-glucose(in) = UMP(in) + UDP-alpha-D-glucose(out)</text>
        <dbReference type="Rhea" id="RHEA:72731"/>
        <dbReference type="ChEBI" id="CHEBI:57865"/>
        <dbReference type="ChEBI" id="CHEBI:58885"/>
    </reaction>
</comment>
<comment type="subcellular location">
    <subcellularLocation>
        <location evidence="1">Golgi apparatus membrane</location>
        <topology evidence="2">Multi-pass membrane protein</topology>
    </subcellularLocation>
</comment>
<comment type="similarity">
    <text evidence="4">Belongs to the TPT transporter family. SLC35D subfamily.</text>
</comment>
<dbReference type="EMBL" id="BC133580">
    <property type="protein sequence ID" value="AAI33581.1"/>
    <property type="molecule type" value="mRNA"/>
</dbReference>
<dbReference type="RefSeq" id="NP_001075928.1">
    <property type="nucleotide sequence ID" value="NM_001082459.2"/>
</dbReference>
<dbReference type="SMR" id="A2VE55"/>
<dbReference type="FunCoup" id="A2VE55">
    <property type="interactions" value="762"/>
</dbReference>
<dbReference type="STRING" id="9913.ENSBTAP00000007164"/>
<dbReference type="PaxDb" id="9913-ENSBTAP00000007164"/>
<dbReference type="Ensembl" id="ENSBTAT00000007164.4">
    <property type="protein sequence ID" value="ENSBTAP00000007164.3"/>
    <property type="gene ID" value="ENSBTAG00000005445.4"/>
</dbReference>
<dbReference type="GeneID" id="613734"/>
<dbReference type="KEGG" id="bta:613734"/>
<dbReference type="CTD" id="23169"/>
<dbReference type="VEuPathDB" id="HostDB:ENSBTAG00000005445"/>
<dbReference type="VGNC" id="VGNC:34828">
    <property type="gene designation" value="SLC35D1"/>
</dbReference>
<dbReference type="eggNOG" id="KOG1444">
    <property type="taxonomic scope" value="Eukaryota"/>
</dbReference>
<dbReference type="GeneTree" id="ENSGT00940000155665"/>
<dbReference type="HOGENOM" id="CLU_040726_1_0_1"/>
<dbReference type="InParanoid" id="A2VE55"/>
<dbReference type="OMA" id="VWMLINC"/>
<dbReference type="OrthoDB" id="417037at2759"/>
<dbReference type="TreeFam" id="TF313307"/>
<dbReference type="Reactome" id="R-BTA-173599">
    <property type="pathway name" value="Formation of the active cofactor, UDP-glucuronate"/>
</dbReference>
<dbReference type="Reactome" id="R-BTA-727802">
    <property type="pathway name" value="Transport of nucleotide sugars"/>
</dbReference>
<dbReference type="Proteomes" id="UP000009136">
    <property type="component" value="Chromosome 3"/>
</dbReference>
<dbReference type="Bgee" id="ENSBTAG00000005445">
    <property type="expression patterns" value="Expressed in oocyte and 100 other cell types or tissues"/>
</dbReference>
<dbReference type="GO" id="GO:0005783">
    <property type="term" value="C:endoplasmic reticulum"/>
    <property type="evidence" value="ECO:0007669"/>
    <property type="project" value="Ensembl"/>
</dbReference>
<dbReference type="GO" id="GO:0005794">
    <property type="term" value="C:Golgi apparatus"/>
    <property type="evidence" value="ECO:0000318"/>
    <property type="project" value="GO_Central"/>
</dbReference>
<dbReference type="GO" id="GO:0000139">
    <property type="term" value="C:Golgi membrane"/>
    <property type="evidence" value="ECO:0000250"/>
    <property type="project" value="UniProtKB"/>
</dbReference>
<dbReference type="GO" id="GO:0015297">
    <property type="term" value="F:antiporter activity"/>
    <property type="evidence" value="ECO:0000318"/>
    <property type="project" value="GO_Central"/>
</dbReference>
<dbReference type="GO" id="GO:0005338">
    <property type="term" value="F:nucleotide-sugar transmembrane transporter activity"/>
    <property type="evidence" value="ECO:0000250"/>
    <property type="project" value="UniProtKB"/>
</dbReference>
<dbReference type="GO" id="GO:0005461">
    <property type="term" value="F:UDP-glucuronate transmembrane transporter activity"/>
    <property type="evidence" value="ECO:0000318"/>
    <property type="project" value="GO_Central"/>
</dbReference>
<dbReference type="GO" id="GO:0005463">
    <property type="term" value="F:UDP-N-acetylgalactosamine transmembrane transporter activity"/>
    <property type="evidence" value="ECO:0000318"/>
    <property type="project" value="GO_Central"/>
</dbReference>
<dbReference type="GO" id="GO:0005462">
    <property type="term" value="F:UDP-N-acetylglucosamine transmembrane transporter activity"/>
    <property type="evidence" value="ECO:0000318"/>
    <property type="project" value="GO_Central"/>
</dbReference>
<dbReference type="GO" id="GO:0048706">
    <property type="term" value="P:embryonic skeletal system development"/>
    <property type="evidence" value="ECO:0007669"/>
    <property type="project" value="Ensembl"/>
</dbReference>
<dbReference type="GO" id="GO:0015012">
    <property type="term" value="P:heparan sulfate proteoglycan biosynthetic process"/>
    <property type="evidence" value="ECO:0000250"/>
    <property type="project" value="UniProtKB"/>
</dbReference>
<dbReference type="GO" id="GO:0015780">
    <property type="term" value="P:nucleotide-sugar transmembrane transport"/>
    <property type="evidence" value="ECO:0000318"/>
    <property type="project" value="GO_Central"/>
</dbReference>
<dbReference type="InterPro" id="IPR004853">
    <property type="entry name" value="Sugar_P_trans_dom"/>
</dbReference>
<dbReference type="InterPro" id="IPR050186">
    <property type="entry name" value="TPT_transporter"/>
</dbReference>
<dbReference type="PANTHER" id="PTHR11132">
    <property type="entry name" value="SOLUTE CARRIER FAMILY 35"/>
    <property type="match status" value="1"/>
</dbReference>
<dbReference type="Pfam" id="PF03151">
    <property type="entry name" value="TPT"/>
    <property type="match status" value="1"/>
</dbReference>
<organism>
    <name type="scientific">Bos taurus</name>
    <name type="common">Bovine</name>
    <dbReference type="NCBI Taxonomy" id="9913"/>
    <lineage>
        <taxon>Eukaryota</taxon>
        <taxon>Metazoa</taxon>
        <taxon>Chordata</taxon>
        <taxon>Craniata</taxon>
        <taxon>Vertebrata</taxon>
        <taxon>Euteleostomi</taxon>
        <taxon>Mammalia</taxon>
        <taxon>Eutheria</taxon>
        <taxon>Laurasiatheria</taxon>
        <taxon>Artiodactyla</taxon>
        <taxon>Ruminantia</taxon>
        <taxon>Pecora</taxon>
        <taxon>Bovidae</taxon>
        <taxon>Bovinae</taxon>
        <taxon>Bos</taxon>
    </lineage>
</organism>
<feature type="chain" id="PRO_0000313079" description="Nucleotide sugar transporter SLC35D2">
    <location>
        <begin position="1"/>
        <end position="355"/>
    </location>
</feature>
<feature type="topological domain" description="Cytoplasmic" evidence="2">
    <location>
        <begin position="1"/>
        <end position="38"/>
    </location>
</feature>
<feature type="transmembrane region" description="Helical" evidence="2">
    <location>
        <begin position="39"/>
        <end position="59"/>
    </location>
</feature>
<feature type="topological domain" description="Extracellular" evidence="2">
    <location>
        <begin position="60"/>
        <end position="68"/>
    </location>
</feature>
<feature type="transmembrane region" description="Helical" evidence="2">
    <location>
        <begin position="69"/>
        <end position="89"/>
    </location>
</feature>
<feature type="topological domain" description="Cytoplasmic" evidence="2">
    <location>
        <begin position="90"/>
        <end position="156"/>
    </location>
</feature>
<feature type="transmembrane region" description="Helical" evidence="2">
    <location>
        <begin position="157"/>
        <end position="177"/>
    </location>
</feature>
<feature type="topological domain" description="Extracellular" evidence="2">
    <location>
        <begin position="178"/>
        <end position="184"/>
    </location>
</feature>
<feature type="transmembrane region" description="Helical" evidence="2">
    <location>
        <begin position="185"/>
        <end position="205"/>
    </location>
</feature>
<feature type="topological domain" description="Cytoplasmic" evidence="2">
    <location>
        <begin position="206"/>
        <end position="216"/>
    </location>
</feature>
<feature type="transmembrane region" description="Helical" evidence="2">
    <location>
        <begin position="217"/>
        <end position="237"/>
    </location>
</feature>
<feature type="topological domain" description="Extracellular" evidence="2">
    <location>
        <begin position="238"/>
        <end position="253"/>
    </location>
</feature>
<feature type="transmembrane region" description="Helical" evidence="2">
    <location>
        <begin position="254"/>
        <end position="274"/>
    </location>
</feature>
<feature type="topological domain" description="Cytoplasmic" evidence="2">
    <location>
        <begin position="275"/>
        <end position="280"/>
    </location>
</feature>
<feature type="transmembrane region" description="Helical" evidence="2">
    <location>
        <begin position="281"/>
        <end position="303"/>
    </location>
</feature>
<feature type="topological domain" description="Extracellular" evidence="2">
    <location>
        <begin position="304"/>
        <end position="314"/>
    </location>
</feature>
<feature type="transmembrane region" description="Helical" evidence="2">
    <location>
        <begin position="315"/>
        <end position="335"/>
    </location>
</feature>
<feature type="topological domain" description="Cytoplasmic" evidence="2">
    <location>
        <begin position="336"/>
        <end position="355"/>
    </location>
</feature>
<feature type="region of interest" description="Disordered" evidence="3">
    <location>
        <begin position="1"/>
        <end position="27"/>
    </location>
</feature>
<feature type="compositionally biased region" description="Basic residues" evidence="3">
    <location>
        <begin position="1"/>
        <end position="11"/>
    </location>
</feature>
<gene>
    <name type="primary">SLC35D2</name>
</gene>
<accession>A2VE55</accession>
<reference key="1">
    <citation type="submission" date="2007-02" db="EMBL/GenBank/DDBJ databases">
        <authorList>
            <consortium name="NIH - Mammalian Gene Collection (MGC) project"/>
        </authorList>
    </citation>
    <scope>NUCLEOTIDE SEQUENCE [LARGE SCALE MRNA]</scope>
    <source>
        <strain>Crossbred X Angus</strain>
        <tissue>Ileum</tissue>
    </source>
</reference>
<keyword id="KW-0050">Antiport</keyword>
<keyword id="KW-0333">Golgi apparatus</keyword>
<keyword id="KW-0472">Membrane</keyword>
<keyword id="KW-1185">Reference proteome</keyword>
<keyword id="KW-0762">Sugar transport</keyword>
<keyword id="KW-0812">Transmembrane</keyword>
<keyword id="KW-1133">Transmembrane helix</keyword>
<keyword id="KW-0813">Transport</keyword>